<comment type="function">
    <text evidence="1">Catalyzes the reversible transfer of the terminal phosphate group between ATP and AMP. Plays an important role in cellular energy homeostasis and in adenine nucleotide metabolism.</text>
</comment>
<comment type="catalytic activity">
    <reaction evidence="1">
        <text>AMP + ATP = 2 ADP</text>
        <dbReference type="Rhea" id="RHEA:12973"/>
        <dbReference type="ChEBI" id="CHEBI:30616"/>
        <dbReference type="ChEBI" id="CHEBI:456215"/>
        <dbReference type="ChEBI" id="CHEBI:456216"/>
        <dbReference type="EC" id="2.7.4.3"/>
    </reaction>
</comment>
<comment type="pathway">
    <text evidence="1">Purine metabolism; AMP biosynthesis via salvage pathway; AMP from ADP: step 1/1.</text>
</comment>
<comment type="subunit">
    <text evidence="1">Monomer.</text>
</comment>
<comment type="subcellular location">
    <subcellularLocation>
        <location evidence="1">Cytoplasm</location>
    </subcellularLocation>
</comment>
<comment type="domain">
    <text evidence="1">Consists of three domains, a large central CORE domain and two small peripheral domains, NMPbind and LID, which undergo movements during catalysis. The LID domain closes over the site of phosphoryl transfer upon ATP binding. Assembling and dissambling the active center during each catalytic cycle provides an effective means to prevent ATP hydrolysis. Some bacteria have evolved a zinc-coordinating structure that stabilizes the LID domain.</text>
</comment>
<comment type="similarity">
    <text evidence="1">Belongs to the adenylate kinase family.</text>
</comment>
<gene>
    <name evidence="1" type="primary">adk</name>
    <name type="ordered locus">OTBS_0356</name>
</gene>
<proteinExistence type="inferred from homology"/>
<reference key="1">
    <citation type="journal article" date="2007" name="Proc. Natl. Acad. Sci. U.S.A.">
        <title>The Orientia tsutsugamushi genome reveals massive proliferation of conjugative type IV secretion system and host-cell interaction genes.</title>
        <authorList>
            <person name="Cho N.-H."/>
            <person name="Kim H.-R."/>
            <person name="Lee J.-H."/>
            <person name="Kim S.-Y."/>
            <person name="Kim J."/>
            <person name="Cha S."/>
            <person name="Kim S.-Y."/>
            <person name="Darby A.C."/>
            <person name="Fuxelius H.-H."/>
            <person name="Yin J."/>
            <person name="Kim J.H."/>
            <person name="Kim J."/>
            <person name="Lee S.J."/>
            <person name="Koh Y.-S."/>
            <person name="Jang W.-J."/>
            <person name="Park K.-H."/>
            <person name="Andersson S.G.E."/>
            <person name="Choi M.-S."/>
            <person name="Kim I.-S."/>
        </authorList>
    </citation>
    <scope>NUCLEOTIDE SEQUENCE [LARGE SCALE GENOMIC DNA]</scope>
    <source>
        <strain>Boryong</strain>
    </source>
</reference>
<protein>
    <recommendedName>
        <fullName evidence="1">Adenylate kinase</fullName>
        <shortName evidence="1">AK</shortName>
        <ecNumber evidence="1">2.7.4.3</ecNumber>
    </recommendedName>
    <alternativeName>
        <fullName evidence="1">ATP-AMP transphosphorylase</fullName>
    </alternativeName>
    <alternativeName>
        <fullName evidence="1">ATP:AMP phosphotransferase</fullName>
    </alternativeName>
    <alternativeName>
        <fullName evidence="1">Adenylate monophosphate kinase</fullName>
    </alternativeName>
</protein>
<accession>A5CCJ2</accession>
<evidence type="ECO:0000255" key="1">
    <source>
        <dbReference type="HAMAP-Rule" id="MF_00235"/>
    </source>
</evidence>
<organism>
    <name type="scientific">Orientia tsutsugamushi (strain Boryong)</name>
    <name type="common">Rickettsia tsutsugamushi</name>
    <dbReference type="NCBI Taxonomy" id="357244"/>
    <lineage>
        <taxon>Bacteria</taxon>
        <taxon>Pseudomonadati</taxon>
        <taxon>Pseudomonadota</taxon>
        <taxon>Alphaproteobacteria</taxon>
        <taxon>Rickettsiales</taxon>
        <taxon>Rickettsiaceae</taxon>
        <taxon>Rickettsieae</taxon>
        <taxon>Orientia</taxon>
    </lineage>
</organism>
<name>KAD_ORITB</name>
<dbReference type="EC" id="2.7.4.3" evidence="1"/>
<dbReference type="EMBL" id="AM494475">
    <property type="protein sequence ID" value="CAM79422.1"/>
    <property type="molecule type" value="Genomic_DNA"/>
</dbReference>
<dbReference type="SMR" id="A5CCJ2"/>
<dbReference type="KEGG" id="ots:OTBS_0356"/>
<dbReference type="eggNOG" id="COG0563">
    <property type="taxonomic scope" value="Bacteria"/>
</dbReference>
<dbReference type="HOGENOM" id="CLU_032354_1_2_5"/>
<dbReference type="UniPathway" id="UPA00588">
    <property type="reaction ID" value="UER00649"/>
</dbReference>
<dbReference type="Proteomes" id="UP000001565">
    <property type="component" value="Chromosome"/>
</dbReference>
<dbReference type="GO" id="GO:0005737">
    <property type="term" value="C:cytoplasm"/>
    <property type="evidence" value="ECO:0007669"/>
    <property type="project" value="UniProtKB-SubCell"/>
</dbReference>
<dbReference type="GO" id="GO:0004017">
    <property type="term" value="F:adenylate kinase activity"/>
    <property type="evidence" value="ECO:0007669"/>
    <property type="project" value="UniProtKB-UniRule"/>
</dbReference>
<dbReference type="GO" id="GO:0005524">
    <property type="term" value="F:ATP binding"/>
    <property type="evidence" value="ECO:0007669"/>
    <property type="project" value="UniProtKB-UniRule"/>
</dbReference>
<dbReference type="GO" id="GO:0008270">
    <property type="term" value="F:zinc ion binding"/>
    <property type="evidence" value="ECO:0007669"/>
    <property type="project" value="UniProtKB-UniRule"/>
</dbReference>
<dbReference type="GO" id="GO:0044209">
    <property type="term" value="P:AMP salvage"/>
    <property type="evidence" value="ECO:0007669"/>
    <property type="project" value="UniProtKB-UniRule"/>
</dbReference>
<dbReference type="CDD" id="cd01428">
    <property type="entry name" value="ADK"/>
    <property type="match status" value="1"/>
</dbReference>
<dbReference type="Gene3D" id="3.40.50.300">
    <property type="entry name" value="P-loop containing nucleotide triphosphate hydrolases"/>
    <property type="match status" value="1"/>
</dbReference>
<dbReference type="HAMAP" id="MF_00235">
    <property type="entry name" value="Adenylate_kinase_Adk"/>
    <property type="match status" value="1"/>
</dbReference>
<dbReference type="InterPro" id="IPR006259">
    <property type="entry name" value="Adenyl_kin_sub"/>
</dbReference>
<dbReference type="InterPro" id="IPR000850">
    <property type="entry name" value="Adenylat/UMP-CMP_kin"/>
</dbReference>
<dbReference type="InterPro" id="IPR033690">
    <property type="entry name" value="Adenylat_kinase_CS"/>
</dbReference>
<dbReference type="InterPro" id="IPR007862">
    <property type="entry name" value="Adenylate_kinase_lid-dom"/>
</dbReference>
<dbReference type="InterPro" id="IPR036193">
    <property type="entry name" value="ADK_active_lid_dom_sf"/>
</dbReference>
<dbReference type="InterPro" id="IPR027417">
    <property type="entry name" value="P-loop_NTPase"/>
</dbReference>
<dbReference type="NCBIfam" id="TIGR01351">
    <property type="entry name" value="adk"/>
    <property type="match status" value="1"/>
</dbReference>
<dbReference type="PANTHER" id="PTHR23359">
    <property type="entry name" value="NUCLEOTIDE KINASE"/>
    <property type="match status" value="1"/>
</dbReference>
<dbReference type="Pfam" id="PF00406">
    <property type="entry name" value="ADK"/>
    <property type="match status" value="1"/>
</dbReference>
<dbReference type="Pfam" id="PF05191">
    <property type="entry name" value="ADK_lid"/>
    <property type="match status" value="1"/>
</dbReference>
<dbReference type="PRINTS" id="PR00094">
    <property type="entry name" value="ADENYLTKNASE"/>
</dbReference>
<dbReference type="SUPFAM" id="SSF57774">
    <property type="entry name" value="Microbial and mitochondrial ADK, insert 'zinc finger' domain"/>
    <property type="match status" value="1"/>
</dbReference>
<dbReference type="SUPFAM" id="SSF52540">
    <property type="entry name" value="P-loop containing nucleoside triphosphate hydrolases"/>
    <property type="match status" value="1"/>
</dbReference>
<dbReference type="PROSITE" id="PS00113">
    <property type="entry name" value="ADENYLATE_KINASE"/>
    <property type="match status" value="1"/>
</dbReference>
<keyword id="KW-0067">ATP-binding</keyword>
<keyword id="KW-0963">Cytoplasm</keyword>
<keyword id="KW-0418">Kinase</keyword>
<keyword id="KW-0479">Metal-binding</keyword>
<keyword id="KW-0545">Nucleotide biosynthesis</keyword>
<keyword id="KW-0547">Nucleotide-binding</keyword>
<keyword id="KW-1185">Reference proteome</keyword>
<keyword id="KW-0808">Transferase</keyword>
<keyword id="KW-0862">Zinc</keyword>
<feature type="chain" id="PRO_1000021752" description="Adenylate kinase">
    <location>
        <begin position="1"/>
        <end position="210"/>
    </location>
</feature>
<feature type="region of interest" description="NMP" evidence="1">
    <location>
        <begin position="28"/>
        <end position="57"/>
    </location>
</feature>
<feature type="region of interest" description="LID" evidence="1">
    <location>
        <begin position="120"/>
        <end position="158"/>
    </location>
</feature>
<feature type="binding site" evidence="1">
    <location>
        <begin position="10"/>
        <end position="15"/>
    </location>
    <ligand>
        <name>ATP</name>
        <dbReference type="ChEBI" id="CHEBI:30616"/>
    </ligand>
</feature>
<feature type="binding site" evidence="1">
    <location>
        <position position="34"/>
    </location>
    <ligand>
        <name>AMP</name>
        <dbReference type="ChEBI" id="CHEBI:456215"/>
    </ligand>
</feature>
<feature type="binding site" evidence="1">
    <location>
        <begin position="55"/>
        <end position="57"/>
    </location>
    <ligand>
        <name>AMP</name>
        <dbReference type="ChEBI" id="CHEBI:456215"/>
    </ligand>
</feature>
<feature type="binding site" evidence="1">
    <location>
        <begin position="83"/>
        <end position="86"/>
    </location>
    <ligand>
        <name>AMP</name>
        <dbReference type="ChEBI" id="CHEBI:456215"/>
    </ligand>
</feature>
<feature type="binding site" evidence="1">
    <location>
        <position position="90"/>
    </location>
    <ligand>
        <name>AMP</name>
        <dbReference type="ChEBI" id="CHEBI:456215"/>
    </ligand>
</feature>
<feature type="binding site" evidence="1">
    <location>
        <position position="121"/>
    </location>
    <ligand>
        <name>ATP</name>
        <dbReference type="ChEBI" id="CHEBI:30616"/>
    </ligand>
</feature>
<feature type="binding site" evidence="1">
    <location>
        <position position="124"/>
    </location>
    <ligand>
        <name>Zn(2+)</name>
        <dbReference type="ChEBI" id="CHEBI:29105"/>
        <note>structural</note>
    </ligand>
</feature>
<feature type="binding site" evidence="1">
    <location>
        <position position="127"/>
    </location>
    <ligand>
        <name>Zn(2+)</name>
        <dbReference type="ChEBI" id="CHEBI:29105"/>
        <note>structural</note>
    </ligand>
</feature>
<feature type="binding site" evidence="1">
    <location>
        <begin position="130"/>
        <end position="131"/>
    </location>
    <ligand>
        <name>ATP</name>
        <dbReference type="ChEBI" id="CHEBI:30616"/>
    </ligand>
</feature>
<feature type="binding site" evidence="1">
    <location>
        <position position="144"/>
    </location>
    <ligand>
        <name>Zn(2+)</name>
        <dbReference type="ChEBI" id="CHEBI:29105"/>
        <note>structural</note>
    </ligand>
</feature>
<feature type="binding site" evidence="1">
    <location>
        <position position="147"/>
    </location>
    <ligand>
        <name>Zn(2+)</name>
        <dbReference type="ChEBI" id="CHEBI:29105"/>
        <note>structural</note>
    </ligand>
</feature>
<feature type="binding site" evidence="1">
    <location>
        <position position="155"/>
    </location>
    <ligand>
        <name>AMP</name>
        <dbReference type="ChEBI" id="CHEBI:456215"/>
    </ligand>
</feature>
<feature type="binding site" evidence="1">
    <location>
        <position position="166"/>
    </location>
    <ligand>
        <name>AMP</name>
        <dbReference type="ChEBI" id="CHEBI:456215"/>
    </ligand>
</feature>
<feature type="binding site" evidence="1">
    <location>
        <position position="194"/>
    </location>
    <ligand>
        <name>ATP</name>
        <dbReference type="ChEBI" id="CHEBI:30616"/>
    </ligand>
</feature>
<sequence length="210" mass="23647">MILVFIGPPGSGKGTQASLLSEKFSIISVGKVLRTVMESNTAEADVVKKFIKSGKLVPSNITNKIVVNALKNIEQCKSIILDGYPRDIFQADFLQENLQMDFKVLFFDIDDAVVLRRLRGRISCTDCGTIYNKLYCMPKINGVCDICNSSSFQNRVDDDESIIKLRLESYKKETLPLLEFYKAQNKLTLIDANQSTENILKKIKKMSGIY</sequence>